<protein>
    <recommendedName>
        <fullName>Inositol-pentakisphosphate 2-kinase</fullName>
        <ecNumber>2.7.1.158</ecNumber>
    </recommendedName>
    <alternativeName>
        <fullName>Inositol-1,3,4,5,6-pentakisphosphate 2-kinase</fullName>
    </alternativeName>
    <alternativeName>
        <fullName>Ins(1,3,4,5,6)P5 2-kinase</fullName>
        <shortName>InsP5 2-kinase</shortName>
    </alternativeName>
</protein>
<accession>Q59KN8</accession>
<accession>A0A1D8PLT1</accession>
<accession>Q59KN1</accession>
<proteinExistence type="inferred from homology"/>
<evidence type="ECO:0000250" key="1"/>
<evidence type="ECO:0000256" key="2">
    <source>
        <dbReference type="SAM" id="MobiDB-lite"/>
    </source>
</evidence>
<evidence type="ECO:0000305" key="3"/>
<dbReference type="EC" id="2.7.1.158"/>
<dbReference type="EMBL" id="CP017626">
    <property type="protein sequence ID" value="AOW29092.1"/>
    <property type="molecule type" value="Genomic_DNA"/>
</dbReference>
<dbReference type="RefSeq" id="XP_710307.1">
    <property type="nucleotide sequence ID" value="XM_705215.1"/>
</dbReference>
<dbReference type="SMR" id="Q59KN8"/>
<dbReference type="FunCoup" id="Q59KN8">
    <property type="interactions" value="42"/>
</dbReference>
<dbReference type="STRING" id="237561.Q59KN8"/>
<dbReference type="EnsemblFungi" id="C4_03330W_A-T">
    <property type="protein sequence ID" value="C4_03330W_A-T-p1"/>
    <property type="gene ID" value="C4_03330W_A"/>
</dbReference>
<dbReference type="GeneID" id="3648091"/>
<dbReference type="KEGG" id="cal:CAALFM_C403330WA"/>
<dbReference type="CGD" id="CAL0000194997">
    <property type="gene designation" value="IPK1"/>
</dbReference>
<dbReference type="VEuPathDB" id="FungiDB:C4_03330W_A"/>
<dbReference type="eggNOG" id="ENOG502S7VH">
    <property type="taxonomic scope" value="Eukaryota"/>
</dbReference>
<dbReference type="HOGENOM" id="CLU_046294_1_0_1"/>
<dbReference type="InParanoid" id="Q59KN8"/>
<dbReference type="OMA" id="FIELRCK"/>
<dbReference type="OrthoDB" id="272370at2759"/>
<dbReference type="PHI-base" id="PHI:10710"/>
<dbReference type="PRO" id="PR:Q59KN8"/>
<dbReference type="Proteomes" id="UP000000559">
    <property type="component" value="Chromosome 4"/>
</dbReference>
<dbReference type="GO" id="GO:0005634">
    <property type="term" value="C:nucleus"/>
    <property type="evidence" value="ECO:0000318"/>
    <property type="project" value="GO_Central"/>
</dbReference>
<dbReference type="GO" id="GO:0005524">
    <property type="term" value="F:ATP binding"/>
    <property type="evidence" value="ECO:0007669"/>
    <property type="project" value="UniProtKB-KW"/>
</dbReference>
<dbReference type="GO" id="GO:0035299">
    <property type="term" value="F:inositol-1,3,4,5,6-pentakisphosphate 2-kinase activity"/>
    <property type="evidence" value="ECO:0000318"/>
    <property type="project" value="GO_Central"/>
</dbReference>
<dbReference type="GO" id="GO:0032958">
    <property type="term" value="P:inositol phosphate biosynthetic process"/>
    <property type="evidence" value="ECO:0000315"/>
    <property type="project" value="CGD"/>
</dbReference>
<dbReference type="GO" id="GO:0010508">
    <property type="term" value="P:positive regulation of autophagy"/>
    <property type="evidence" value="ECO:0000315"/>
    <property type="project" value="CGD"/>
</dbReference>
<dbReference type="Gene3D" id="3.30.200.110">
    <property type="entry name" value="Inositol-pentakisphosphate 2-kinase, N-lobe"/>
    <property type="match status" value="1"/>
</dbReference>
<dbReference type="InterPro" id="IPR009286">
    <property type="entry name" value="Ins_P5_2-kin"/>
</dbReference>
<dbReference type="InterPro" id="IPR043001">
    <property type="entry name" value="IP5_2-K_N_lobe"/>
</dbReference>
<dbReference type="PANTHER" id="PTHR14456">
    <property type="entry name" value="INOSITOL POLYPHOSPHATE KINASE 1"/>
    <property type="match status" value="1"/>
</dbReference>
<dbReference type="PANTHER" id="PTHR14456:SF2">
    <property type="entry name" value="INOSITOL-PENTAKISPHOSPHATE 2-KINASE"/>
    <property type="match status" value="1"/>
</dbReference>
<dbReference type="Pfam" id="PF06090">
    <property type="entry name" value="Ins_P5_2-kin"/>
    <property type="match status" value="1"/>
</dbReference>
<comment type="function">
    <text evidence="1">Has kinase activity and phosphorylates inositol-1,3,4,5,6-pentakisphosphate (Ins(1,3,4,5,6)P5) to produce 1,2,3,4,5,6-hexakisphosphate (InsP6), also known as phytate.</text>
</comment>
<comment type="catalytic activity">
    <reaction>
        <text>1D-myo-inositol 1,3,4,5,6-pentakisphosphate + ATP = 1D-myo-inositol hexakisphosphate + ADP + H(+)</text>
        <dbReference type="Rhea" id="RHEA:20313"/>
        <dbReference type="ChEBI" id="CHEBI:15378"/>
        <dbReference type="ChEBI" id="CHEBI:30616"/>
        <dbReference type="ChEBI" id="CHEBI:57733"/>
        <dbReference type="ChEBI" id="CHEBI:58130"/>
        <dbReference type="ChEBI" id="CHEBI:456216"/>
        <dbReference type="EC" id="2.7.1.158"/>
    </reaction>
</comment>
<comment type="subcellular location">
    <subcellularLocation>
        <location evidence="1">Nucleus</location>
    </subcellularLocation>
</comment>
<comment type="domain">
    <text>The EXKPK motif is conserved in inositol-pentakisphosphate 2-kinases of both family 1 and 2.</text>
</comment>
<comment type="similarity">
    <text evidence="3">Belongs to the IPK1 type 1 family.</text>
</comment>
<sequence>MEISKITSPEDWEYFAKGAANILFKYTGNNDYLKRKLLRLRLLKQEEEYISTCELYDFIELRCKDLFPNQIIDIQLTVLDSNFTNKLNSQGNKLMLNERYGLLLPNILDGDYRKISLSQKCQLYFNDNDQDINSVIFEIKPKWLYDNYTDNYCRTCSLNQLKKVPRHFCPLDLLYTETIEQGLNDLFAPIPQDIYAKIEKLIPLKKLTTIYFNNPDNVFQKLKQYQKINNKNDLIKNLTSYSDVSQNLSLVMTLRDVGLFIKIEKFDKNNHIHTSHNNIKNVYRINDNKSNGTKDQDQEIGTNDEEDNDEKFLITCNIYDLDLKSKMKYKHWLKVENDLQEIYNSSNPNWRYCIKYDQIHH</sequence>
<name>IPK1_CANAL</name>
<organism>
    <name type="scientific">Candida albicans (strain SC5314 / ATCC MYA-2876)</name>
    <name type="common">Yeast</name>
    <dbReference type="NCBI Taxonomy" id="237561"/>
    <lineage>
        <taxon>Eukaryota</taxon>
        <taxon>Fungi</taxon>
        <taxon>Dikarya</taxon>
        <taxon>Ascomycota</taxon>
        <taxon>Saccharomycotina</taxon>
        <taxon>Pichiomycetes</taxon>
        <taxon>Debaryomycetaceae</taxon>
        <taxon>Candida/Lodderomyces clade</taxon>
        <taxon>Candida</taxon>
    </lineage>
</organism>
<keyword id="KW-0067">ATP-binding</keyword>
<keyword id="KW-0418">Kinase</keyword>
<keyword id="KW-0547">Nucleotide-binding</keyword>
<keyword id="KW-0539">Nucleus</keyword>
<keyword id="KW-1185">Reference proteome</keyword>
<keyword id="KW-0808">Transferase</keyword>
<reference key="1">
    <citation type="journal article" date="2004" name="Proc. Natl. Acad. Sci. U.S.A.">
        <title>The diploid genome sequence of Candida albicans.</title>
        <authorList>
            <person name="Jones T."/>
            <person name="Federspiel N.A."/>
            <person name="Chibana H."/>
            <person name="Dungan J."/>
            <person name="Kalman S."/>
            <person name="Magee B.B."/>
            <person name="Newport G."/>
            <person name="Thorstenson Y.R."/>
            <person name="Agabian N."/>
            <person name="Magee P.T."/>
            <person name="Davis R.W."/>
            <person name="Scherer S."/>
        </authorList>
    </citation>
    <scope>NUCLEOTIDE SEQUENCE [LARGE SCALE GENOMIC DNA]</scope>
    <source>
        <strain>SC5314 / ATCC MYA-2876</strain>
    </source>
</reference>
<reference key="2">
    <citation type="journal article" date="2007" name="Genome Biol.">
        <title>Assembly of the Candida albicans genome into sixteen supercontigs aligned on the eight chromosomes.</title>
        <authorList>
            <person name="van het Hoog M."/>
            <person name="Rast T.J."/>
            <person name="Martchenko M."/>
            <person name="Grindle S."/>
            <person name="Dignard D."/>
            <person name="Hogues H."/>
            <person name="Cuomo C."/>
            <person name="Berriman M."/>
            <person name="Scherer S."/>
            <person name="Magee B.B."/>
            <person name="Whiteway M."/>
            <person name="Chibana H."/>
            <person name="Nantel A."/>
            <person name="Magee P.T."/>
        </authorList>
    </citation>
    <scope>GENOME REANNOTATION</scope>
    <source>
        <strain>SC5314 / ATCC MYA-2876</strain>
    </source>
</reference>
<reference key="3">
    <citation type="journal article" date="2013" name="Genome Biol.">
        <title>Assembly of a phased diploid Candida albicans genome facilitates allele-specific measurements and provides a simple model for repeat and indel structure.</title>
        <authorList>
            <person name="Muzzey D."/>
            <person name="Schwartz K."/>
            <person name="Weissman J.S."/>
            <person name="Sherlock G."/>
        </authorList>
    </citation>
    <scope>NUCLEOTIDE SEQUENCE [LARGE SCALE GENOMIC DNA]</scope>
    <scope>GENOME REANNOTATION</scope>
    <source>
        <strain>SC5314 / ATCC MYA-2876</strain>
    </source>
</reference>
<gene>
    <name type="primary">IPK1</name>
    <name type="ordered locus">CAALFM_C403330WA</name>
    <name type="ORF">CaO19.1439</name>
    <name type="ORF">CaO19.9013</name>
</gene>
<feature type="chain" id="PRO_0000110522" description="Inositol-pentakisphosphate 2-kinase">
    <location>
        <begin position="1"/>
        <end position="361"/>
    </location>
</feature>
<feature type="region of interest" description="Disordered" evidence="2">
    <location>
        <begin position="285"/>
        <end position="304"/>
    </location>
</feature>
<feature type="short sequence motif" description="EXKPK motif">
    <location>
        <begin position="138"/>
        <end position="142"/>
    </location>
</feature>